<sequence length="159" mass="18184">MKVKLICVGKLKERYLKDGISEYQKRLSRFCQFEMIELTDERTPDKASFADNQLIMSKEAQRIHKKIGERDFVIALAIEGKQFPSETFSELISGVTVKGYSTITFIIGGSLGLDSIIKKRANMLMSFGLLTLPHQLMRLVLTEQIYRAFMITKGSPYHK</sequence>
<feature type="chain" id="PRO_0000411544" description="Ribosomal RNA large subunit methyltransferase H">
    <location>
        <begin position="1"/>
        <end position="159"/>
    </location>
</feature>
<feature type="binding site" evidence="1">
    <location>
        <position position="76"/>
    </location>
    <ligand>
        <name>S-adenosyl-L-methionine</name>
        <dbReference type="ChEBI" id="CHEBI:59789"/>
    </ligand>
</feature>
<feature type="binding site" evidence="1">
    <location>
        <position position="108"/>
    </location>
    <ligand>
        <name>S-adenosyl-L-methionine</name>
        <dbReference type="ChEBI" id="CHEBI:59789"/>
    </ligand>
</feature>
<feature type="binding site" evidence="1">
    <location>
        <begin position="127"/>
        <end position="132"/>
    </location>
    <ligand>
        <name>S-adenosyl-L-methionine</name>
        <dbReference type="ChEBI" id="CHEBI:59789"/>
    </ligand>
</feature>
<reference key="1">
    <citation type="journal article" date="2003" name="Genome Res.">
        <title>Genome sequence of an M3 strain of Streptococcus pyogenes reveals a large-scale genomic rearrangement in invasive strains and new insights into phage evolution.</title>
        <authorList>
            <person name="Nakagawa I."/>
            <person name="Kurokawa K."/>
            <person name="Yamashita A."/>
            <person name="Nakata M."/>
            <person name="Tomiyasu Y."/>
            <person name="Okahashi N."/>
            <person name="Kawabata S."/>
            <person name="Yamazaki K."/>
            <person name="Shiba T."/>
            <person name="Yasunaga T."/>
            <person name="Hayashi H."/>
            <person name="Hattori M."/>
            <person name="Hamada S."/>
        </authorList>
    </citation>
    <scope>NUCLEOTIDE SEQUENCE [LARGE SCALE GENOMIC DNA]</scope>
    <source>
        <strain>SSI-1</strain>
    </source>
</reference>
<accession>P0DF09</accession>
<accession>Q8K5F8</accession>
<proteinExistence type="inferred from homology"/>
<gene>
    <name evidence="1" type="primary">rlmH</name>
    <name type="ordered locus">SPs1859</name>
</gene>
<dbReference type="EC" id="2.1.1.177" evidence="1"/>
<dbReference type="EMBL" id="BA000034">
    <property type="protein sequence ID" value="BAC64954.1"/>
    <property type="molecule type" value="Genomic_DNA"/>
</dbReference>
<dbReference type="RefSeq" id="WP_002994924.1">
    <property type="nucleotide sequence ID" value="NC_004606.1"/>
</dbReference>
<dbReference type="SMR" id="P0DF09"/>
<dbReference type="KEGG" id="sps:SPs1859"/>
<dbReference type="HOGENOM" id="CLU_100552_0_0_9"/>
<dbReference type="GO" id="GO:0005737">
    <property type="term" value="C:cytoplasm"/>
    <property type="evidence" value="ECO:0007669"/>
    <property type="project" value="UniProtKB-SubCell"/>
</dbReference>
<dbReference type="GO" id="GO:0070038">
    <property type="term" value="F:rRNA (pseudouridine-N3-)-methyltransferase activity"/>
    <property type="evidence" value="ECO:0007669"/>
    <property type="project" value="UniProtKB-UniRule"/>
</dbReference>
<dbReference type="CDD" id="cd18081">
    <property type="entry name" value="RlmH-like"/>
    <property type="match status" value="1"/>
</dbReference>
<dbReference type="Gene3D" id="3.40.1280.10">
    <property type="match status" value="1"/>
</dbReference>
<dbReference type="HAMAP" id="MF_00658">
    <property type="entry name" value="23SrRNA_methyltr_H"/>
    <property type="match status" value="1"/>
</dbReference>
<dbReference type="InterPro" id="IPR029028">
    <property type="entry name" value="Alpha/beta_knot_MTases"/>
</dbReference>
<dbReference type="InterPro" id="IPR003742">
    <property type="entry name" value="RlmH-like"/>
</dbReference>
<dbReference type="InterPro" id="IPR029026">
    <property type="entry name" value="tRNA_m1G_MTases_N"/>
</dbReference>
<dbReference type="NCBIfam" id="NF000985">
    <property type="entry name" value="PRK00103.1-3"/>
    <property type="match status" value="1"/>
</dbReference>
<dbReference type="NCBIfam" id="TIGR00246">
    <property type="entry name" value="tRNA_RlmH_YbeA"/>
    <property type="match status" value="1"/>
</dbReference>
<dbReference type="PANTHER" id="PTHR33603">
    <property type="entry name" value="METHYLTRANSFERASE"/>
    <property type="match status" value="1"/>
</dbReference>
<dbReference type="PANTHER" id="PTHR33603:SF1">
    <property type="entry name" value="RIBOSOMAL RNA LARGE SUBUNIT METHYLTRANSFERASE H"/>
    <property type="match status" value="1"/>
</dbReference>
<dbReference type="Pfam" id="PF02590">
    <property type="entry name" value="SPOUT_MTase"/>
    <property type="match status" value="1"/>
</dbReference>
<dbReference type="PIRSF" id="PIRSF004505">
    <property type="entry name" value="MT_bac"/>
    <property type="match status" value="1"/>
</dbReference>
<dbReference type="SUPFAM" id="SSF75217">
    <property type="entry name" value="alpha/beta knot"/>
    <property type="match status" value="1"/>
</dbReference>
<keyword id="KW-0963">Cytoplasm</keyword>
<keyword id="KW-0489">Methyltransferase</keyword>
<keyword id="KW-0698">rRNA processing</keyword>
<keyword id="KW-0949">S-adenosyl-L-methionine</keyword>
<keyword id="KW-0808">Transferase</keyword>
<protein>
    <recommendedName>
        <fullName evidence="1">Ribosomal RNA large subunit methyltransferase H</fullName>
        <ecNumber evidence="1">2.1.1.177</ecNumber>
    </recommendedName>
    <alternativeName>
        <fullName evidence="1">23S rRNA (pseudouridine1915-N3)-methyltransferase</fullName>
    </alternativeName>
    <alternativeName>
        <fullName evidence="1">23S rRNA m3Psi1915 methyltransferase</fullName>
    </alternativeName>
    <alternativeName>
        <fullName evidence="1">rRNA (pseudouridine-N3-)-methyltransferase RlmH</fullName>
    </alternativeName>
</protein>
<comment type="function">
    <text evidence="1">Specifically methylates the pseudouridine at position 1915 (m3Psi1915) in 23S rRNA.</text>
</comment>
<comment type="catalytic activity">
    <reaction evidence="1">
        <text>pseudouridine(1915) in 23S rRNA + S-adenosyl-L-methionine = N(3)-methylpseudouridine(1915) in 23S rRNA + S-adenosyl-L-homocysteine + H(+)</text>
        <dbReference type="Rhea" id="RHEA:42752"/>
        <dbReference type="Rhea" id="RHEA-COMP:10221"/>
        <dbReference type="Rhea" id="RHEA-COMP:10222"/>
        <dbReference type="ChEBI" id="CHEBI:15378"/>
        <dbReference type="ChEBI" id="CHEBI:57856"/>
        <dbReference type="ChEBI" id="CHEBI:59789"/>
        <dbReference type="ChEBI" id="CHEBI:65314"/>
        <dbReference type="ChEBI" id="CHEBI:74486"/>
        <dbReference type="EC" id="2.1.1.177"/>
    </reaction>
</comment>
<comment type="subunit">
    <text evidence="1">Homodimer.</text>
</comment>
<comment type="subcellular location">
    <subcellularLocation>
        <location evidence="1">Cytoplasm</location>
    </subcellularLocation>
</comment>
<comment type="similarity">
    <text evidence="1">Belongs to the RNA methyltransferase RlmH family.</text>
</comment>
<name>RLMH_STRPQ</name>
<organism>
    <name type="scientific">Streptococcus pyogenes serotype M3 (strain SSI-1)</name>
    <dbReference type="NCBI Taxonomy" id="193567"/>
    <lineage>
        <taxon>Bacteria</taxon>
        <taxon>Bacillati</taxon>
        <taxon>Bacillota</taxon>
        <taxon>Bacilli</taxon>
        <taxon>Lactobacillales</taxon>
        <taxon>Streptococcaceae</taxon>
        <taxon>Streptococcus</taxon>
    </lineage>
</organism>
<evidence type="ECO:0000255" key="1">
    <source>
        <dbReference type="HAMAP-Rule" id="MF_00658"/>
    </source>
</evidence>